<sequence length="301" mass="32470">MKIGILSQFPELYSTRRLVAACESRGHEAVVINTLNCYMNINSIKPSIHYQGQELTGFDAIIPRIHASVTFYGCAVVRQFEMMGVFAANDSISIARSRDKLRALQLLSRKGIGMPVTGFANKPNDIPDLINMVGGAPLVIKLLEGTQGIGVVLAETKTAAESVIEAFLGLKANIMVQEYIKESNGSDIRCFVVGDKVVASMKRQGPEGDFRSNLHLGGCGEKVKITPEERKMAVAAVKAMGLVVAGVDILRSNRGPLILEVNSAPGIEGIEQTTGISVTEPIVEYIEKMVLARKSNRAVIA</sequence>
<proteinExistence type="inferred from homology"/>
<gene>
    <name evidence="1" type="primary">rimK2</name>
    <name type="ordered locus">Shewmr7_3484</name>
</gene>
<protein>
    <recommendedName>
        <fullName evidence="1">Probable alpha-L-glutamate ligase 2</fullName>
        <ecNumber evidence="1">6.3.2.-</ecNumber>
    </recommendedName>
</protein>
<comment type="cofactor">
    <cofactor evidence="1">
        <name>Mg(2+)</name>
        <dbReference type="ChEBI" id="CHEBI:18420"/>
    </cofactor>
    <cofactor evidence="1">
        <name>Mn(2+)</name>
        <dbReference type="ChEBI" id="CHEBI:29035"/>
    </cofactor>
    <text evidence="1">Binds 2 magnesium or manganese ions per subunit.</text>
</comment>
<comment type="similarity">
    <text evidence="1">Belongs to the RimK family.</text>
</comment>
<reference key="1">
    <citation type="submission" date="2006-08" db="EMBL/GenBank/DDBJ databases">
        <title>Complete sequence of chromosome 1 of Shewanella sp. MR-7.</title>
        <authorList>
            <person name="Copeland A."/>
            <person name="Lucas S."/>
            <person name="Lapidus A."/>
            <person name="Barry K."/>
            <person name="Detter J.C."/>
            <person name="Glavina del Rio T."/>
            <person name="Hammon N."/>
            <person name="Israni S."/>
            <person name="Dalin E."/>
            <person name="Tice H."/>
            <person name="Pitluck S."/>
            <person name="Kiss H."/>
            <person name="Brettin T."/>
            <person name="Bruce D."/>
            <person name="Han C."/>
            <person name="Tapia R."/>
            <person name="Gilna P."/>
            <person name="Schmutz J."/>
            <person name="Larimer F."/>
            <person name="Land M."/>
            <person name="Hauser L."/>
            <person name="Kyrpides N."/>
            <person name="Mikhailova N."/>
            <person name="Nealson K."/>
            <person name="Konstantinidis K."/>
            <person name="Klappenbach J."/>
            <person name="Tiedje J."/>
            <person name="Richardson P."/>
        </authorList>
    </citation>
    <scope>NUCLEOTIDE SEQUENCE [LARGE SCALE GENOMIC DNA]</scope>
    <source>
        <strain>MR-7</strain>
    </source>
</reference>
<evidence type="ECO:0000255" key="1">
    <source>
        <dbReference type="HAMAP-Rule" id="MF_01552"/>
    </source>
</evidence>
<feature type="chain" id="PRO_0000340565" description="Probable alpha-L-glutamate ligase 2">
    <location>
        <begin position="1"/>
        <end position="301"/>
    </location>
</feature>
<feature type="domain" description="ATP-grasp" evidence="1">
    <location>
        <begin position="104"/>
        <end position="287"/>
    </location>
</feature>
<feature type="binding site" evidence="1">
    <location>
        <position position="141"/>
    </location>
    <ligand>
        <name>ATP</name>
        <dbReference type="ChEBI" id="CHEBI:30616"/>
    </ligand>
</feature>
<feature type="binding site" evidence="1">
    <location>
        <begin position="178"/>
        <end position="179"/>
    </location>
    <ligand>
        <name>ATP</name>
        <dbReference type="ChEBI" id="CHEBI:30616"/>
    </ligand>
</feature>
<feature type="binding site" evidence="1">
    <location>
        <position position="187"/>
    </location>
    <ligand>
        <name>ATP</name>
        <dbReference type="ChEBI" id="CHEBI:30616"/>
    </ligand>
</feature>
<feature type="binding site" evidence="1">
    <location>
        <begin position="211"/>
        <end position="213"/>
    </location>
    <ligand>
        <name>ATP</name>
        <dbReference type="ChEBI" id="CHEBI:30616"/>
    </ligand>
</feature>
<feature type="binding site" evidence="1">
    <location>
        <position position="248"/>
    </location>
    <ligand>
        <name>Mg(2+)</name>
        <dbReference type="ChEBI" id="CHEBI:18420"/>
        <label>1</label>
    </ligand>
</feature>
<feature type="binding site" evidence="1">
    <location>
        <position position="248"/>
    </location>
    <ligand>
        <name>Mn(2+)</name>
        <dbReference type="ChEBI" id="CHEBI:29035"/>
        <label>1</label>
    </ligand>
</feature>
<feature type="binding site" evidence="1">
    <location>
        <position position="260"/>
    </location>
    <ligand>
        <name>Mg(2+)</name>
        <dbReference type="ChEBI" id="CHEBI:18420"/>
        <label>1</label>
    </ligand>
</feature>
<feature type="binding site" evidence="1">
    <location>
        <position position="260"/>
    </location>
    <ligand>
        <name>Mg(2+)</name>
        <dbReference type="ChEBI" id="CHEBI:18420"/>
        <label>2</label>
    </ligand>
</feature>
<feature type="binding site" evidence="1">
    <location>
        <position position="260"/>
    </location>
    <ligand>
        <name>Mn(2+)</name>
        <dbReference type="ChEBI" id="CHEBI:29035"/>
        <label>1</label>
    </ligand>
</feature>
<feature type="binding site" evidence="1">
    <location>
        <position position="260"/>
    </location>
    <ligand>
        <name>Mn(2+)</name>
        <dbReference type="ChEBI" id="CHEBI:29035"/>
        <label>2</label>
    </ligand>
</feature>
<feature type="binding site" evidence="1">
    <location>
        <position position="262"/>
    </location>
    <ligand>
        <name>Mg(2+)</name>
        <dbReference type="ChEBI" id="CHEBI:18420"/>
        <label>2</label>
    </ligand>
</feature>
<feature type="binding site" evidence="1">
    <location>
        <position position="262"/>
    </location>
    <ligand>
        <name>Mn(2+)</name>
        <dbReference type="ChEBI" id="CHEBI:29035"/>
        <label>2</label>
    </ligand>
</feature>
<dbReference type="EC" id="6.3.2.-" evidence="1"/>
<dbReference type="EMBL" id="CP000444">
    <property type="protein sequence ID" value="ABI44465.1"/>
    <property type="molecule type" value="Genomic_DNA"/>
</dbReference>
<dbReference type="SMR" id="Q0HQZ0"/>
<dbReference type="KEGG" id="shm:Shewmr7_3484"/>
<dbReference type="HOGENOM" id="CLU_054353_0_1_6"/>
<dbReference type="GO" id="GO:0005737">
    <property type="term" value="C:cytoplasm"/>
    <property type="evidence" value="ECO:0007669"/>
    <property type="project" value="TreeGrafter"/>
</dbReference>
<dbReference type="GO" id="GO:0005524">
    <property type="term" value="F:ATP binding"/>
    <property type="evidence" value="ECO:0007669"/>
    <property type="project" value="UniProtKB-UniRule"/>
</dbReference>
<dbReference type="GO" id="GO:0046872">
    <property type="term" value="F:metal ion binding"/>
    <property type="evidence" value="ECO:0007669"/>
    <property type="project" value="UniProtKB-KW"/>
</dbReference>
<dbReference type="GO" id="GO:0018169">
    <property type="term" value="F:ribosomal S6-glutamic acid ligase activity"/>
    <property type="evidence" value="ECO:0007669"/>
    <property type="project" value="TreeGrafter"/>
</dbReference>
<dbReference type="GO" id="GO:0036211">
    <property type="term" value="P:protein modification process"/>
    <property type="evidence" value="ECO:0007669"/>
    <property type="project" value="InterPro"/>
</dbReference>
<dbReference type="GO" id="GO:0009432">
    <property type="term" value="P:SOS response"/>
    <property type="evidence" value="ECO:0007669"/>
    <property type="project" value="TreeGrafter"/>
</dbReference>
<dbReference type="GO" id="GO:0006412">
    <property type="term" value="P:translation"/>
    <property type="evidence" value="ECO:0007669"/>
    <property type="project" value="UniProtKB-KW"/>
</dbReference>
<dbReference type="FunFam" id="3.30.470.20:FF:000058">
    <property type="entry name" value="Alpha-aminoadipate--LysW ligase LysX protein"/>
    <property type="match status" value="1"/>
</dbReference>
<dbReference type="FunFam" id="3.40.50.20:FF:000004">
    <property type="entry name" value="Probable alpha-L-glutamate ligase"/>
    <property type="match status" value="1"/>
</dbReference>
<dbReference type="FunFam" id="3.30.1490.20:FF:000005">
    <property type="entry name" value="Probable alpha-L-glutamate ligase 1"/>
    <property type="match status" value="1"/>
</dbReference>
<dbReference type="Gene3D" id="3.40.50.20">
    <property type="match status" value="1"/>
</dbReference>
<dbReference type="Gene3D" id="3.30.1490.20">
    <property type="entry name" value="ATP-grasp fold, A domain"/>
    <property type="match status" value="1"/>
</dbReference>
<dbReference type="Gene3D" id="3.30.470.20">
    <property type="entry name" value="ATP-grasp fold, B domain"/>
    <property type="match status" value="1"/>
</dbReference>
<dbReference type="HAMAP" id="MF_01552">
    <property type="entry name" value="RimK"/>
    <property type="match status" value="1"/>
</dbReference>
<dbReference type="InterPro" id="IPR011761">
    <property type="entry name" value="ATP-grasp"/>
</dbReference>
<dbReference type="InterPro" id="IPR013651">
    <property type="entry name" value="ATP-grasp_RimK-type"/>
</dbReference>
<dbReference type="InterPro" id="IPR013815">
    <property type="entry name" value="ATP_grasp_subdomain_1"/>
</dbReference>
<dbReference type="InterPro" id="IPR023533">
    <property type="entry name" value="RimK"/>
</dbReference>
<dbReference type="InterPro" id="IPR041107">
    <property type="entry name" value="Rimk_N"/>
</dbReference>
<dbReference type="InterPro" id="IPR004666">
    <property type="entry name" value="Rp_bS6_RimK/Lys_biosynth_LsyX"/>
</dbReference>
<dbReference type="NCBIfam" id="NF007764">
    <property type="entry name" value="PRK10446.1"/>
    <property type="match status" value="1"/>
</dbReference>
<dbReference type="NCBIfam" id="TIGR00768">
    <property type="entry name" value="rimK_fam"/>
    <property type="match status" value="1"/>
</dbReference>
<dbReference type="PANTHER" id="PTHR21621:SF7">
    <property type="entry name" value="RIBOSOMAL PROTEIN BS6--L-GLUTAMATE LIGASE"/>
    <property type="match status" value="1"/>
</dbReference>
<dbReference type="PANTHER" id="PTHR21621">
    <property type="entry name" value="RIBOSOMAL PROTEIN S6 MODIFICATION PROTEIN"/>
    <property type="match status" value="1"/>
</dbReference>
<dbReference type="Pfam" id="PF08443">
    <property type="entry name" value="RimK"/>
    <property type="match status" value="1"/>
</dbReference>
<dbReference type="Pfam" id="PF18030">
    <property type="entry name" value="Rimk_N"/>
    <property type="match status" value="1"/>
</dbReference>
<dbReference type="SUPFAM" id="SSF56059">
    <property type="entry name" value="Glutathione synthetase ATP-binding domain-like"/>
    <property type="match status" value="1"/>
</dbReference>
<dbReference type="PROSITE" id="PS50975">
    <property type="entry name" value="ATP_GRASP"/>
    <property type="match status" value="1"/>
</dbReference>
<keyword id="KW-0067">ATP-binding</keyword>
<keyword id="KW-0436">Ligase</keyword>
<keyword id="KW-0460">Magnesium</keyword>
<keyword id="KW-0464">Manganese</keyword>
<keyword id="KW-0479">Metal-binding</keyword>
<keyword id="KW-0547">Nucleotide-binding</keyword>
<keyword id="KW-0648">Protein biosynthesis</keyword>
<organism>
    <name type="scientific">Shewanella sp. (strain MR-7)</name>
    <dbReference type="NCBI Taxonomy" id="60481"/>
    <lineage>
        <taxon>Bacteria</taxon>
        <taxon>Pseudomonadati</taxon>
        <taxon>Pseudomonadota</taxon>
        <taxon>Gammaproteobacteria</taxon>
        <taxon>Alteromonadales</taxon>
        <taxon>Shewanellaceae</taxon>
        <taxon>Shewanella</taxon>
    </lineage>
</organism>
<name>RIMK2_SHESR</name>
<accession>Q0HQZ0</accession>